<name>RUBR3_RHOER</name>
<protein>
    <recommendedName>
        <fullName>Rubredoxin 3</fullName>
    </recommendedName>
</protein>
<dbReference type="EMBL" id="AJ297269">
    <property type="protein sequence ID" value="CAC37039.1"/>
    <property type="molecule type" value="Genomic_DNA"/>
</dbReference>
<dbReference type="RefSeq" id="WP_003940827.1">
    <property type="nucleotide sequence ID" value="NZ_WIDN01000096.1"/>
</dbReference>
<dbReference type="SMR" id="P0A4E8"/>
<dbReference type="STRING" id="1833.XU06_10560"/>
<dbReference type="OMA" id="MSAYRCP"/>
<dbReference type="OrthoDB" id="9800607at2"/>
<dbReference type="GO" id="GO:0009055">
    <property type="term" value="F:electron transfer activity"/>
    <property type="evidence" value="ECO:0007669"/>
    <property type="project" value="TreeGrafter"/>
</dbReference>
<dbReference type="GO" id="GO:0005506">
    <property type="term" value="F:iron ion binding"/>
    <property type="evidence" value="ECO:0007669"/>
    <property type="project" value="InterPro"/>
</dbReference>
<dbReference type="GO" id="GO:0043448">
    <property type="term" value="P:alkane catabolic process"/>
    <property type="evidence" value="ECO:0007669"/>
    <property type="project" value="TreeGrafter"/>
</dbReference>
<dbReference type="CDD" id="cd00730">
    <property type="entry name" value="rubredoxin"/>
    <property type="match status" value="1"/>
</dbReference>
<dbReference type="FunFam" id="2.20.28.10:FF:000001">
    <property type="entry name" value="Rubredoxin"/>
    <property type="match status" value="1"/>
</dbReference>
<dbReference type="Gene3D" id="2.20.28.10">
    <property type="match status" value="1"/>
</dbReference>
<dbReference type="InterPro" id="IPR024934">
    <property type="entry name" value="Rubredoxin-like_dom"/>
</dbReference>
<dbReference type="InterPro" id="IPR024935">
    <property type="entry name" value="Rubredoxin_dom"/>
</dbReference>
<dbReference type="InterPro" id="IPR050526">
    <property type="entry name" value="Rubredoxin_ET"/>
</dbReference>
<dbReference type="InterPro" id="IPR018527">
    <property type="entry name" value="Rubredoxin_Fe_BS"/>
</dbReference>
<dbReference type="PANTHER" id="PTHR47627">
    <property type="entry name" value="RUBREDOXIN"/>
    <property type="match status" value="1"/>
</dbReference>
<dbReference type="PANTHER" id="PTHR47627:SF1">
    <property type="entry name" value="RUBREDOXIN-1-RELATED"/>
    <property type="match status" value="1"/>
</dbReference>
<dbReference type="Pfam" id="PF00301">
    <property type="entry name" value="Rubredoxin"/>
    <property type="match status" value="1"/>
</dbReference>
<dbReference type="PRINTS" id="PR00163">
    <property type="entry name" value="RUBREDOXIN"/>
</dbReference>
<dbReference type="SUPFAM" id="SSF57802">
    <property type="entry name" value="Rubredoxin-like"/>
    <property type="match status" value="1"/>
</dbReference>
<dbReference type="PROSITE" id="PS00202">
    <property type="entry name" value="RUBREDOXIN"/>
    <property type="match status" value="1"/>
</dbReference>
<dbReference type="PROSITE" id="PS50903">
    <property type="entry name" value="RUBREDOXIN_LIKE"/>
    <property type="match status" value="1"/>
</dbReference>
<feature type="chain" id="PRO_0000135046" description="Rubredoxin 3">
    <location>
        <begin position="1"/>
        <end position="61"/>
    </location>
</feature>
<feature type="domain" description="Rubredoxin-like" evidence="2">
    <location>
        <begin position="1"/>
        <end position="53"/>
    </location>
</feature>
<feature type="binding site" evidence="2">
    <location>
        <position position="6"/>
    </location>
    <ligand>
        <name>Fe cation</name>
        <dbReference type="ChEBI" id="CHEBI:24875"/>
    </ligand>
</feature>
<feature type="binding site" evidence="2">
    <location>
        <position position="9"/>
    </location>
    <ligand>
        <name>Fe cation</name>
        <dbReference type="ChEBI" id="CHEBI:24875"/>
    </ligand>
</feature>
<feature type="binding site" evidence="2">
    <location>
        <position position="39"/>
    </location>
    <ligand>
        <name>Fe cation</name>
        <dbReference type="ChEBI" id="CHEBI:24875"/>
    </ligand>
</feature>
<feature type="binding site" evidence="2">
    <location>
        <position position="42"/>
    </location>
    <ligand>
        <name>Fe cation</name>
        <dbReference type="ChEBI" id="CHEBI:24875"/>
    </ligand>
</feature>
<sequence length="61" mass="6707">MSSYRCPVCEYVYDESKGAPREGFPAGTPWDAVPDDWCCPDCGVREKLDFEPMPATAGSES</sequence>
<evidence type="ECO:0000250" key="1"/>
<evidence type="ECO:0000255" key="2">
    <source>
        <dbReference type="PROSITE-ProRule" id="PRU00241"/>
    </source>
</evidence>
<evidence type="ECO:0000305" key="3"/>
<gene>
    <name type="primary">rubA3</name>
</gene>
<proteinExistence type="inferred from homology"/>
<organism>
    <name type="scientific">Rhodococcus erythropolis</name>
    <name type="common">Arthrobacter picolinophilus</name>
    <dbReference type="NCBI Taxonomy" id="1833"/>
    <lineage>
        <taxon>Bacteria</taxon>
        <taxon>Bacillati</taxon>
        <taxon>Actinomycetota</taxon>
        <taxon>Actinomycetes</taxon>
        <taxon>Mycobacteriales</taxon>
        <taxon>Nocardiaceae</taxon>
        <taxon>Rhodococcus</taxon>
        <taxon>Rhodococcus erythropolis group</taxon>
    </lineage>
</organism>
<reference key="1">
    <citation type="journal article" date="2002" name="Environ. Microbiol.">
        <title>Alkane hydroxylase homologues in Gram-positive strains.</title>
        <authorList>
            <person name="van Beilen J.B."/>
            <person name="Smits T.H.M."/>
            <person name="Whyte L.G."/>
            <person name="Schorcht S."/>
            <person name="Rothlisberger M."/>
            <person name="Plaggemeier T."/>
            <person name="Engesser K.H."/>
            <person name="Witholt B."/>
        </authorList>
    </citation>
    <scope>NUCLEOTIDE SEQUENCE [GENOMIC DNA]</scope>
    <source>
        <strain>ATCC 15960 / IAM 1474 / JCM 2893 / NRRL B-16531</strain>
    </source>
</reference>
<keyword id="KW-0249">Electron transport</keyword>
<keyword id="KW-0408">Iron</keyword>
<keyword id="KW-0479">Metal-binding</keyword>
<keyword id="KW-0813">Transport</keyword>
<comment type="function">
    <text evidence="1">Involved in the hydrocarbon hydroxylating system, which transfers electrons from NADH to rubredoxin reductase and then through rubredoxin to alkane 1 monooxygenase.</text>
</comment>
<comment type="cofactor">
    <cofactor evidence="1">
        <name>Fe(3+)</name>
        <dbReference type="ChEBI" id="CHEBI:29034"/>
    </cofactor>
    <text evidence="1">Binds 1 Fe(3+) ion per subunit.</text>
</comment>
<comment type="similarity">
    <text evidence="3">Belongs to the rubredoxin family.</text>
</comment>
<accession>P0A4E8</accession>
<accession>Q9AE67</accession>